<evidence type="ECO:0000255" key="1">
    <source>
        <dbReference type="HAMAP-Rule" id="MF_00440"/>
    </source>
</evidence>
<dbReference type="EMBL" id="CP001157">
    <property type="protein sequence ID" value="ACO76921.1"/>
    <property type="molecule type" value="Genomic_DNA"/>
</dbReference>
<dbReference type="RefSeq" id="WP_012699346.1">
    <property type="nucleotide sequence ID" value="NC_012560.1"/>
</dbReference>
<dbReference type="SMR" id="C1DLH3"/>
<dbReference type="STRING" id="322710.Avin_06700"/>
<dbReference type="EnsemblBacteria" id="ACO76921">
    <property type="protein sequence ID" value="ACO76921"/>
    <property type="gene ID" value="Avin_06700"/>
</dbReference>
<dbReference type="GeneID" id="88184080"/>
<dbReference type="KEGG" id="avn:Avin_06700"/>
<dbReference type="eggNOG" id="COG1327">
    <property type="taxonomic scope" value="Bacteria"/>
</dbReference>
<dbReference type="HOGENOM" id="CLU_108412_0_0_6"/>
<dbReference type="OrthoDB" id="9807461at2"/>
<dbReference type="Proteomes" id="UP000002424">
    <property type="component" value="Chromosome"/>
</dbReference>
<dbReference type="GO" id="GO:0005524">
    <property type="term" value="F:ATP binding"/>
    <property type="evidence" value="ECO:0007669"/>
    <property type="project" value="UniProtKB-KW"/>
</dbReference>
<dbReference type="GO" id="GO:0003677">
    <property type="term" value="F:DNA binding"/>
    <property type="evidence" value="ECO:0007669"/>
    <property type="project" value="UniProtKB-KW"/>
</dbReference>
<dbReference type="GO" id="GO:0008270">
    <property type="term" value="F:zinc ion binding"/>
    <property type="evidence" value="ECO:0007669"/>
    <property type="project" value="UniProtKB-UniRule"/>
</dbReference>
<dbReference type="GO" id="GO:0045892">
    <property type="term" value="P:negative regulation of DNA-templated transcription"/>
    <property type="evidence" value="ECO:0007669"/>
    <property type="project" value="UniProtKB-UniRule"/>
</dbReference>
<dbReference type="HAMAP" id="MF_00440">
    <property type="entry name" value="NrdR"/>
    <property type="match status" value="1"/>
</dbReference>
<dbReference type="InterPro" id="IPR005144">
    <property type="entry name" value="ATP-cone_dom"/>
</dbReference>
<dbReference type="InterPro" id="IPR055173">
    <property type="entry name" value="NrdR-like_N"/>
</dbReference>
<dbReference type="InterPro" id="IPR003796">
    <property type="entry name" value="RNR_NrdR-like"/>
</dbReference>
<dbReference type="NCBIfam" id="TIGR00244">
    <property type="entry name" value="transcriptional regulator NrdR"/>
    <property type="match status" value="1"/>
</dbReference>
<dbReference type="PANTHER" id="PTHR30455">
    <property type="entry name" value="TRANSCRIPTIONAL REPRESSOR NRDR"/>
    <property type="match status" value="1"/>
</dbReference>
<dbReference type="PANTHER" id="PTHR30455:SF2">
    <property type="entry name" value="TRANSCRIPTIONAL REPRESSOR NRDR"/>
    <property type="match status" value="1"/>
</dbReference>
<dbReference type="Pfam" id="PF03477">
    <property type="entry name" value="ATP-cone"/>
    <property type="match status" value="1"/>
</dbReference>
<dbReference type="Pfam" id="PF22811">
    <property type="entry name" value="Zn_ribbon_NrdR"/>
    <property type="match status" value="1"/>
</dbReference>
<dbReference type="PROSITE" id="PS51161">
    <property type="entry name" value="ATP_CONE"/>
    <property type="match status" value="1"/>
</dbReference>
<keyword id="KW-0067">ATP-binding</keyword>
<keyword id="KW-0238">DNA-binding</keyword>
<keyword id="KW-0479">Metal-binding</keyword>
<keyword id="KW-0547">Nucleotide-binding</keyword>
<keyword id="KW-0678">Repressor</keyword>
<keyword id="KW-0804">Transcription</keyword>
<keyword id="KW-0805">Transcription regulation</keyword>
<keyword id="KW-0862">Zinc</keyword>
<keyword id="KW-0863">Zinc-finger</keyword>
<proteinExistence type="inferred from homology"/>
<reference key="1">
    <citation type="journal article" date="2009" name="J. Bacteriol.">
        <title>Genome sequence of Azotobacter vinelandii, an obligate aerobe specialized to support diverse anaerobic metabolic processes.</title>
        <authorList>
            <person name="Setubal J.C."/>
            <person name="Dos Santos P."/>
            <person name="Goldman B.S."/>
            <person name="Ertesvaag H."/>
            <person name="Espin G."/>
            <person name="Rubio L.M."/>
            <person name="Valla S."/>
            <person name="Almeida N.F."/>
            <person name="Balasubramanian D."/>
            <person name="Cromes L."/>
            <person name="Curatti L."/>
            <person name="Du Z."/>
            <person name="Godsy E."/>
            <person name="Goodner B."/>
            <person name="Hellner-Burris K."/>
            <person name="Hernandez J.A."/>
            <person name="Houmiel K."/>
            <person name="Imperial J."/>
            <person name="Kennedy C."/>
            <person name="Larson T.J."/>
            <person name="Latreille P."/>
            <person name="Ligon L.S."/>
            <person name="Lu J."/>
            <person name="Maerk M."/>
            <person name="Miller N.M."/>
            <person name="Norton S."/>
            <person name="O'Carroll I.P."/>
            <person name="Paulsen I."/>
            <person name="Raulfs E.C."/>
            <person name="Roemer R."/>
            <person name="Rosser J."/>
            <person name="Segura D."/>
            <person name="Slater S."/>
            <person name="Stricklin S.L."/>
            <person name="Studholme D.J."/>
            <person name="Sun J."/>
            <person name="Viana C.J."/>
            <person name="Wallin E."/>
            <person name="Wang B."/>
            <person name="Wheeler C."/>
            <person name="Zhu H."/>
            <person name="Dean D.R."/>
            <person name="Dixon R."/>
            <person name="Wood D."/>
        </authorList>
    </citation>
    <scope>NUCLEOTIDE SEQUENCE [LARGE SCALE GENOMIC DNA]</scope>
    <source>
        <strain>DJ / ATCC BAA-1303</strain>
    </source>
</reference>
<gene>
    <name evidence="1" type="primary">nrdR</name>
    <name type="ordered locus">Avin_06700</name>
</gene>
<comment type="function">
    <text evidence="1">Negatively regulates transcription of bacterial ribonucleotide reductase nrd genes and operons by binding to NrdR-boxes.</text>
</comment>
<comment type="cofactor">
    <cofactor evidence="1">
        <name>Zn(2+)</name>
        <dbReference type="ChEBI" id="CHEBI:29105"/>
    </cofactor>
    <text evidence="1">Binds 1 zinc ion.</text>
</comment>
<comment type="similarity">
    <text evidence="1">Belongs to the NrdR family.</text>
</comment>
<feature type="chain" id="PRO_1000206108" description="Transcriptional repressor NrdR">
    <location>
        <begin position="1"/>
        <end position="154"/>
    </location>
</feature>
<feature type="domain" description="ATP-cone" evidence="1">
    <location>
        <begin position="49"/>
        <end position="139"/>
    </location>
</feature>
<feature type="zinc finger region" evidence="1">
    <location>
        <begin position="3"/>
        <end position="34"/>
    </location>
</feature>
<sequence>MHCPFCSAHDTKVIDSRLVAEGDQVRRRRECQACGERFTTFETAELVMPRVIKQDGSRQPFDEDKLRAGMQRALEKRPVSVERLEAAIGRIKHELRATGEREVKSRVLGELVMAELRKLDEVAYIRFASVYRRFQDLNEFREEIERLSREPSKP</sequence>
<organism>
    <name type="scientific">Azotobacter vinelandii (strain DJ / ATCC BAA-1303)</name>
    <dbReference type="NCBI Taxonomy" id="322710"/>
    <lineage>
        <taxon>Bacteria</taxon>
        <taxon>Pseudomonadati</taxon>
        <taxon>Pseudomonadota</taxon>
        <taxon>Gammaproteobacteria</taxon>
        <taxon>Pseudomonadales</taxon>
        <taxon>Pseudomonadaceae</taxon>
        <taxon>Azotobacter</taxon>
    </lineage>
</organism>
<name>NRDR_AZOVD</name>
<protein>
    <recommendedName>
        <fullName evidence="1">Transcriptional repressor NrdR</fullName>
    </recommendedName>
</protein>
<accession>C1DLH3</accession>